<keyword id="KW-0903">Direct protein sequencing</keyword>
<keyword id="KW-1015">Disulfide bond</keyword>
<keyword id="KW-0325">Glycoprotein</keyword>
<keyword id="KW-0348">Hemagglutinin</keyword>
<keyword id="KW-0430">Lectin</keyword>
<dbReference type="iPTMnet" id="C0HK25"/>
<dbReference type="GO" id="GO:0005534">
    <property type="term" value="F:galactose binding"/>
    <property type="evidence" value="ECO:0000314"/>
    <property type="project" value="UniProtKB"/>
</dbReference>
<dbReference type="GO" id="GO:0016936">
    <property type="term" value="F:galactoside binding"/>
    <property type="evidence" value="ECO:0000314"/>
    <property type="project" value="UniProtKB"/>
</dbReference>
<dbReference type="GO" id="GO:0048032">
    <property type="term" value="F:galacturonate binding"/>
    <property type="evidence" value="ECO:0000314"/>
    <property type="project" value="UniProtKB"/>
</dbReference>
<dbReference type="GO" id="GO:0030395">
    <property type="term" value="F:lactose binding"/>
    <property type="evidence" value="ECO:0000314"/>
    <property type="project" value="UniProtKB"/>
</dbReference>
<dbReference type="GO" id="GO:1903777">
    <property type="term" value="F:melibiose binding"/>
    <property type="evidence" value="ECO:0000314"/>
    <property type="project" value="UniProtKB"/>
</dbReference>
<dbReference type="GO" id="GO:0034120">
    <property type="term" value="P:positive regulation of erythrocyte aggregation"/>
    <property type="evidence" value="ECO:0000314"/>
    <property type="project" value="UniProtKB"/>
</dbReference>
<dbReference type="InterPro" id="IPR021381">
    <property type="entry name" value="DUF3011"/>
</dbReference>
<dbReference type="Pfam" id="PF11218">
    <property type="entry name" value="DUF3011"/>
    <property type="match status" value="1"/>
</dbReference>
<feature type="chain" id="PRO_0000439881" description="Lectin ADEL" evidence="1">
    <location>
        <begin position="1"/>
        <end position="217"/>
    </location>
</feature>
<feature type="glycosylation site" description="N-linked (GlcNAc...) asparagine" evidence="1">
    <location>
        <position position="30"/>
    </location>
</feature>
<feature type="glycosylation site" description="N-linked (GlcNAc...) asparagine" evidence="1">
    <location>
        <position position="102"/>
    </location>
</feature>
<feature type="glycosylation site" description="N-linked (GlcNAc...) asparagine" evidence="1">
    <location>
        <position position="126"/>
    </location>
</feature>
<feature type="disulfide bond" evidence="2">
    <location>
        <begin position="5"/>
        <end position="187"/>
    </location>
</feature>
<feature type="disulfide bond" evidence="2">
    <location>
        <begin position="42"/>
        <end position="68"/>
    </location>
</feature>
<feature type="disulfide bond" evidence="2">
    <location>
        <begin position="61"/>
        <end position="77"/>
    </location>
</feature>
<feature type="disulfide bond" evidence="2">
    <location>
        <begin position="114"/>
        <end position="135"/>
    </location>
</feature>
<feature type="disulfide bond" evidence="2">
    <location>
        <begin position="142"/>
        <end position="206"/>
    </location>
</feature>
<feature type="disulfide bond" description="Interchain" evidence="2">
    <location>
        <position position="172"/>
    </location>
</feature>
<feature type="sequence variant" evidence="1">
    <original>K</original>
    <variation>M</variation>
    <location>
        <position position="4"/>
    </location>
</feature>
<feature type="sequence variant" evidence="1">
    <original>A</original>
    <variation>D</variation>
    <location>
        <position position="53"/>
    </location>
</feature>
<feature type="sequence variant" evidence="1">
    <original>T</original>
    <variation>A</variation>
    <location>
        <position position="199"/>
    </location>
</feature>
<comment type="function">
    <text evidence="1">Binds in decreasing order of affinity: galacturonic acid, D-galactosamine, methyl-alpha-D-galactopyranoside and further galactose-containing carbohydrates. Has hemagglutinating activity against human and rabbit erythrocytes.</text>
</comment>
<comment type="biophysicochemical properties">
    <phDependence>
        <text evidence="1">Optimum pH is 6-7.</text>
    </phDependence>
    <temperatureDependence>
        <text evidence="1">Activity is stable up to 60 degrees Celsius, then decreases and is lost at 80 degrees Celsius.</text>
    </temperatureDependence>
</comment>
<comment type="subunit">
    <text evidence="1">Homodimer; disulfide-linked.</text>
</comment>
<comment type="PTM">
    <text evidence="1">Contains disulfide bonds.</text>
</comment>
<comment type="mass spectrometry">
    <text>Dimer.</text>
</comment>
<reference evidence="3" key="1">
    <citation type="journal article" date="2017" name="Mar. Biotechnol.">
        <title>Purification, biochemical characterization, and amino acid sequence of a novel type of lectin from Aplysia dactylomela eggs with antibacterial/antibiofilm potential.</title>
        <authorList>
            <person name="Carneiro R.F."/>
            <person name="Torres R.C."/>
            <person name="Chaves R.P."/>
            <person name="de Vasconcelos M.A."/>
            <person name="de Sousa B.L."/>
            <person name="Goveia A.C."/>
            <person name="Arruda F.V."/>
            <person name="Matos M.N."/>
            <person name="Matthews-Cascon H."/>
            <person name="Freire V.N."/>
            <person name="Teixeira E.H."/>
            <person name="Nagano C.S."/>
            <person name="Sampaio A.H."/>
        </authorList>
    </citation>
    <scope>PROTEIN SEQUENCE</scope>
    <scope>FUNCTION</scope>
    <scope>BIOPHYSICOCHEMICAL PROPERTIES</scope>
    <scope>SUBUNIT</scope>
    <scope>PRESENCE OF DISULFIDE BONDS</scope>
    <scope>MASS SPECTROMETRY</scope>
    <scope>IDENTIFICATION BY MASS SPECTROMETRY</scope>
    <scope>GLYCOSYLATION AT ASN-30; ASN-102 AND ASN-126</scope>
    <source>
        <tissue evidence="2">Egg</tissue>
    </source>
</reference>
<evidence type="ECO:0000269" key="1">
    <source>
    </source>
</evidence>
<evidence type="ECO:0000303" key="2">
    <source>
    </source>
</evidence>
<evidence type="ECO:0000305" key="3"/>
<accession>C0HK25</accession>
<proteinExistence type="evidence at protein level"/>
<protein>
    <recommendedName>
        <fullName evidence="2">Lectin ADEL</fullName>
    </recommendedName>
</protein>
<organism evidence="2">
    <name type="scientific">Aplysia dactylomela</name>
    <name type="common">Spotted sea hare</name>
    <dbReference type="NCBI Taxonomy" id="144766"/>
    <lineage>
        <taxon>Eukaryota</taxon>
        <taxon>Metazoa</taxon>
        <taxon>Spiralia</taxon>
        <taxon>Lophotrochozoa</taxon>
        <taxon>Mollusca</taxon>
        <taxon>Gastropoda</taxon>
        <taxon>Heterobranchia</taxon>
        <taxon>Euthyneura</taxon>
        <taxon>Tectipleura</taxon>
        <taxon>Aplysiida</taxon>
        <taxon>Aplysioidea</taxon>
        <taxon>Aplysiidae</taxon>
        <taxon>Aplysia</taxon>
    </lineage>
</organism>
<sequence>DPDKCKTIRVESWSYKYAEKVVEDASYVLNMTVVDRQSAAACTLGESFGYQKATLWVDHGCRADFKVCYLPVMPTECQTLRVESWNYKYAEKVVEGAALFINMTVEDRQSEASCDLDKSFGFYNQNSTVWVNHGCRADFNICYLKGAVTTSTINVSSWNYQYATKVLPAASCIYSMRVVNQQSAAPCTLGTTYGFVANTMWVDDGCRADFKPSYYSP</sequence>
<name>ADEL_APLDA</name>